<gene>
    <name evidence="1" type="primary">rplX</name>
    <name type="ordered locus">GFO_2828</name>
</gene>
<comment type="function">
    <text evidence="1">One of two assembly initiator proteins, it binds directly to the 5'-end of the 23S rRNA, where it nucleates assembly of the 50S subunit.</text>
</comment>
<comment type="function">
    <text evidence="1">One of the proteins that surrounds the polypeptide exit tunnel on the outside of the subunit.</text>
</comment>
<comment type="subunit">
    <text evidence="1">Part of the 50S ribosomal subunit.</text>
</comment>
<comment type="similarity">
    <text evidence="1">Belongs to the universal ribosomal protein uL24 family.</text>
</comment>
<dbReference type="EMBL" id="CU207366">
    <property type="protein sequence ID" value="CAL67782.1"/>
    <property type="molecule type" value="Genomic_DNA"/>
</dbReference>
<dbReference type="RefSeq" id="WP_011710685.1">
    <property type="nucleotide sequence ID" value="NC_008571.1"/>
</dbReference>
<dbReference type="SMR" id="A0M587"/>
<dbReference type="STRING" id="411154.GFO_2828"/>
<dbReference type="KEGG" id="gfo:GFO_2828"/>
<dbReference type="eggNOG" id="COG0198">
    <property type="taxonomic scope" value="Bacteria"/>
</dbReference>
<dbReference type="HOGENOM" id="CLU_093315_2_0_10"/>
<dbReference type="OrthoDB" id="9807419at2"/>
<dbReference type="Proteomes" id="UP000000755">
    <property type="component" value="Chromosome"/>
</dbReference>
<dbReference type="GO" id="GO:1990904">
    <property type="term" value="C:ribonucleoprotein complex"/>
    <property type="evidence" value="ECO:0007669"/>
    <property type="project" value="UniProtKB-KW"/>
</dbReference>
<dbReference type="GO" id="GO:0005840">
    <property type="term" value="C:ribosome"/>
    <property type="evidence" value="ECO:0007669"/>
    <property type="project" value="UniProtKB-KW"/>
</dbReference>
<dbReference type="GO" id="GO:0019843">
    <property type="term" value="F:rRNA binding"/>
    <property type="evidence" value="ECO:0007669"/>
    <property type="project" value="UniProtKB-UniRule"/>
</dbReference>
<dbReference type="GO" id="GO:0003735">
    <property type="term" value="F:structural constituent of ribosome"/>
    <property type="evidence" value="ECO:0007669"/>
    <property type="project" value="InterPro"/>
</dbReference>
<dbReference type="GO" id="GO:0006412">
    <property type="term" value="P:translation"/>
    <property type="evidence" value="ECO:0007669"/>
    <property type="project" value="UniProtKB-UniRule"/>
</dbReference>
<dbReference type="CDD" id="cd06089">
    <property type="entry name" value="KOW_RPL26"/>
    <property type="match status" value="1"/>
</dbReference>
<dbReference type="FunFam" id="2.30.30.30:FF:000004">
    <property type="entry name" value="50S ribosomal protein L24"/>
    <property type="match status" value="1"/>
</dbReference>
<dbReference type="Gene3D" id="2.30.30.30">
    <property type="match status" value="1"/>
</dbReference>
<dbReference type="HAMAP" id="MF_01326_B">
    <property type="entry name" value="Ribosomal_uL24_B"/>
    <property type="match status" value="1"/>
</dbReference>
<dbReference type="InterPro" id="IPR005824">
    <property type="entry name" value="KOW"/>
</dbReference>
<dbReference type="InterPro" id="IPR014722">
    <property type="entry name" value="Rib_uL2_dom2"/>
</dbReference>
<dbReference type="InterPro" id="IPR003256">
    <property type="entry name" value="Ribosomal_uL24"/>
</dbReference>
<dbReference type="InterPro" id="IPR005825">
    <property type="entry name" value="Ribosomal_uL24_CS"/>
</dbReference>
<dbReference type="InterPro" id="IPR041988">
    <property type="entry name" value="Ribosomal_uL24_KOW"/>
</dbReference>
<dbReference type="InterPro" id="IPR008991">
    <property type="entry name" value="Translation_prot_SH3-like_sf"/>
</dbReference>
<dbReference type="NCBIfam" id="TIGR01079">
    <property type="entry name" value="rplX_bact"/>
    <property type="match status" value="1"/>
</dbReference>
<dbReference type="PANTHER" id="PTHR12903">
    <property type="entry name" value="MITOCHONDRIAL RIBOSOMAL PROTEIN L24"/>
    <property type="match status" value="1"/>
</dbReference>
<dbReference type="Pfam" id="PF00467">
    <property type="entry name" value="KOW"/>
    <property type="match status" value="1"/>
</dbReference>
<dbReference type="Pfam" id="PF17136">
    <property type="entry name" value="ribosomal_L24"/>
    <property type="match status" value="1"/>
</dbReference>
<dbReference type="SMART" id="SM00739">
    <property type="entry name" value="KOW"/>
    <property type="match status" value="1"/>
</dbReference>
<dbReference type="SUPFAM" id="SSF50104">
    <property type="entry name" value="Translation proteins SH3-like domain"/>
    <property type="match status" value="1"/>
</dbReference>
<dbReference type="PROSITE" id="PS01108">
    <property type="entry name" value="RIBOSOMAL_L24"/>
    <property type="match status" value="1"/>
</dbReference>
<evidence type="ECO:0000255" key="1">
    <source>
        <dbReference type="HAMAP-Rule" id="MF_01326"/>
    </source>
</evidence>
<evidence type="ECO:0000305" key="2"/>
<reference key="1">
    <citation type="journal article" date="2006" name="Environ. Microbiol.">
        <title>Whole genome analysis of the marine Bacteroidetes'Gramella forsetii' reveals adaptations to degradation of polymeric organic matter.</title>
        <authorList>
            <person name="Bauer M."/>
            <person name="Kube M."/>
            <person name="Teeling H."/>
            <person name="Richter M."/>
            <person name="Lombardot T."/>
            <person name="Allers E."/>
            <person name="Wuerdemann C.A."/>
            <person name="Quast C."/>
            <person name="Kuhl H."/>
            <person name="Knaust F."/>
            <person name="Woebken D."/>
            <person name="Bischof K."/>
            <person name="Mussmann M."/>
            <person name="Choudhuri J.V."/>
            <person name="Meyer F."/>
            <person name="Reinhardt R."/>
            <person name="Amann R.I."/>
            <person name="Gloeckner F.O."/>
        </authorList>
    </citation>
    <scope>NUCLEOTIDE SEQUENCE [LARGE SCALE GENOMIC DNA]</scope>
    <source>
        <strain>DSM 17595 / CGMCC 1.15422 / KT0803</strain>
    </source>
</reference>
<keyword id="KW-0687">Ribonucleoprotein</keyword>
<keyword id="KW-0689">Ribosomal protein</keyword>
<keyword id="KW-0694">RNA-binding</keyword>
<keyword id="KW-0699">rRNA-binding</keyword>
<feature type="chain" id="PRO_1000052220" description="Large ribosomal subunit protein uL24">
    <location>
        <begin position="1"/>
        <end position="103"/>
    </location>
</feature>
<proteinExistence type="inferred from homology"/>
<organism>
    <name type="scientific">Christiangramia forsetii (strain DSM 17595 / CGMCC 1.15422 / KT0803)</name>
    <name type="common">Gramella forsetii</name>
    <dbReference type="NCBI Taxonomy" id="411154"/>
    <lineage>
        <taxon>Bacteria</taxon>
        <taxon>Pseudomonadati</taxon>
        <taxon>Bacteroidota</taxon>
        <taxon>Flavobacteriia</taxon>
        <taxon>Flavobacteriales</taxon>
        <taxon>Flavobacteriaceae</taxon>
        <taxon>Christiangramia</taxon>
    </lineage>
</organism>
<protein>
    <recommendedName>
        <fullName evidence="1">Large ribosomal subunit protein uL24</fullName>
    </recommendedName>
    <alternativeName>
        <fullName evidence="2">50S ribosomal protein L24</fullName>
    </alternativeName>
</protein>
<sequence>MTKLKIKSGDTVRVIAGDHKGQEGKVQKVLIEKNKAIVEGVNMISKHEKPSASNPQGGIKEKEAPIHISNLSLIDKNGDTTRVGYKEEDGKKVRFSKKSNEVI</sequence>
<accession>A0M587</accession>
<name>RL24_CHRFK</name>